<name>SYS_WOLPM</name>
<organism>
    <name type="scientific">Wolbachia pipientis wMel</name>
    <dbReference type="NCBI Taxonomy" id="163164"/>
    <lineage>
        <taxon>Bacteria</taxon>
        <taxon>Pseudomonadati</taxon>
        <taxon>Pseudomonadota</taxon>
        <taxon>Alphaproteobacteria</taxon>
        <taxon>Rickettsiales</taxon>
        <taxon>Anaplasmataceae</taxon>
        <taxon>Wolbachieae</taxon>
        <taxon>Wolbachia</taxon>
    </lineage>
</organism>
<protein>
    <recommendedName>
        <fullName evidence="1">Serine--tRNA ligase</fullName>
        <ecNumber evidence="1">6.1.1.11</ecNumber>
    </recommendedName>
    <alternativeName>
        <fullName evidence="1">Seryl-tRNA synthetase</fullName>
        <shortName evidence="1">SerRS</shortName>
    </alternativeName>
    <alternativeName>
        <fullName evidence="1">Seryl-tRNA(Ser/Sec) synthetase</fullName>
    </alternativeName>
</protein>
<accession>Q73IW5</accession>
<dbReference type="EC" id="6.1.1.11" evidence="1"/>
<dbReference type="EMBL" id="AE017196">
    <property type="protein sequence ID" value="AAS13795.1"/>
    <property type="molecule type" value="Genomic_DNA"/>
</dbReference>
<dbReference type="RefSeq" id="WP_010962316.1">
    <property type="nucleotide sequence ID" value="NZ_OX384529.1"/>
</dbReference>
<dbReference type="SMR" id="Q73IW5"/>
<dbReference type="EnsemblBacteria" id="AAS13795">
    <property type="protein sequence ID" value="AAS13795"/>
    <property type="gene ID" value="WD_0028"/>
</dbReference>
<dbReference type="GeneID" id="70035524"/>
<dbReference type="KEGG" id="wol:WD_0028"/>
<dbReference type="eggNOG" id="COG0172">
    <property type="taxonomic scope" value="Bacteria"/>
</dbReference>
<dbReference type="UniPathway" id="UPA00906">
    <property type="reaction ID" value="UER00895"/>
</dbReference>
<dbReference type="Proteomes" id="UP000008215">
    <property type="component" value="Chromosome"/>
</dbReference>
<dbReference type="GO" id="GO:0005737">
    <property type="term" value="C:cytoplasm"/>
    <property type="evidence" value="ECO:0007669"/>
    <property type="project" value="UniProtKB-SubCell"/>
</dbReference>
<dbReference type="GO" id="GO:0005524">
    <property type="term" value="F:ATP binding"/>
    <property type="evidence" value="ECO:0007669"/>
    <property type="project" value="UniProtKB-UniRule"/>
</dbReference>
<dbReference type="GO" id="GO:0004828">
    <property type="term" value="F:serine-tRNA ligase activity"/>
    <property type="evidence" value="ECO:0007669"/>
    <property type="project" value="UniProtKB-UniRule"/>
</dbReference>
<dbReference type="GO" id="GO:0016260">
    <property type="term" value="P:selenocysteine biosynthetic process"/>
    <property type="evidence" value="ECO:0007669"/>
    <property type="project" value="UniProtKB-UniRule"/>
</dbReference>
<dbReference type="GO" id="GO:0006434">
    <property type="term" value="P:seryl-tRNA aminoacylation"/>
    <property type="evidence" value="ECO:0007669"/>
    <property type="project" value="UniProtKB-UniRule"/>
</dbReference>
<dbReference type="CDD" id="cd00770">
    <property type="entry name" value="SerRS_core"/>
    <property type="match status" value="1"/>
</dbReference>
<dbReference type="Gene3D" id="3.30.930.10">
    <property type="entry name" value="Bira Bifunctional Protein, Domain 2"/>
    <property type="match status" value="1"/>
</dbReference>
<dbReference type="Gene3D" id="1.10.287.40">
    <property type="entry name" value="Serine-tRNA synthetase, tRNA binding domain"/>
    <property type="match status" value="1"/>
</dbReference>
<dbReference type="HAMAP" id="MF_00176">
    <property type="entry name" value="Ser_tRNA_synth_type1"/>
    <property type="match status" value="1"/>
</dbReference>
<dbReference type="InterPro" id="IPR002314">
    <property type="entry name" value="aa-tRNA-synt_IIb"/>
</dbReference>
<dbReference type="InterPro" id="IPR006195">
    <property type="entry name" value="aa-tRNA-synth_II"/>
</dbReference>
<dbReference type="InterPro" id="IPR045864">
    <property type="entry name" value="aa-tRNA-synth_II/BPL/LPL"/>
</dbReference>
<dbReference type="InterPro" id="IPR002317">
    <property type="entry name" value="Ser-tRNA-ligase_type_1"/>
</dbReference>
<dbReference type="InterPro" id="IPR015866">
    <property type="entry name" value="Ser-tRNA-synth_1_N"/>
</dbReference>
<dbReference type="InterPro" id="IPR042103">
    <property type="entry name" value="SerRS_1_N_sf"/>
</dbReference>
<dbReference type="InterPro" id="IPR033729">
    <property type="entry name" value="SerRS_core"/>
</dbReference>
<dbReference type="InterPro" id="IPR010978">
    <property type="entry name" value="tRNA-bd_arm"/>
</dbReference>
<dbReference type="NCBIfam" id="TIGR00414">
    <property type="entry name" value="serS"/>
    <property type="match status" value="1"/>
</dbReference>
<dbReference type="PANTHER" id="PTHR43697:SF1">
    <property type="entry name" value="SERINE--TRNA LIGASE"/>
    <property type="match status" value="1"/>
</dbReference>
<dbReference type="PANTHER" id="PTHR43697">
    <property type="entry name" value="SERYL-TRNA SYNTHETASE"/>
    <property type="match status" value="1"/>
</dbReference>
<dbReference type="Pfam" id="PF02403">
    <property type="entry name" value="Seryl_tRNA_N"/>
    <property type="match status" value="1"/>
</dbReference>
<dbReference type="Pfam" id="PF00587">
    <property type="entry name" value="tRNA-synt_2b"/>
    <property type="match status" value="1"/>
</dbReference>
<dbReference type="PIRSF" id="PIRSF001529">
    <property type="entry name" value="Ser-tRNA-synth_IIa"/>
    <property type="match status" value="1"/>
</dbReference>
<dbReference type="PRINTS" id="PR00981">
    <property type="entry name" value="TRNASYNTHSER"/>
</dbReference>
<dbReference type="SUPFAM" id="SSF55681">
    <property type="entry name" value="Class II aaRS and biotin synthetases"/>
    <property type="match status" value="1"/>
</dbReference>
<dbReference type="SUPFAM" id="SSF46589">
    <property type="entry name" value="tRNA-binding arm"/>
    <property type="match status" value="1"/>
</dbReference>
<dbReference type="PROSITE" id="PS50862">
    <property type="entry name" value="AA_TRNA_LIGASE_II"/>
    <property type="match status" value="1"/>
</dbReference>
<keyword id="KW-0030">Aminoacyl-tRNA synthetase</keyword>
<keyword id="KW-0067">ATP-binding</keyword>
<keyword id="KW-0963">Cytoplasm</keyword>
<keyword id="KW-0436">Ligase</keyword>
<keyword id="KW-0547">Nucleotide-binding</keyword>
<keyword id="KW-0648">Protein biosynthesis</keyword>
<proteinExistence type="inferred from homology"/>
<evidence type="ECO:0000255" key="1">
    <source>
        <dbReference type="HAMAP-Rule" id="MF_00176"/>
    </source>
</evidence>
<comment type="function">
    <text evidence="1">Catalyzes the attachment of serine to tRNA(Ser). Is also able to aminoacylate tRNA(Sec) with serine, to form the misacylated tRNA L-seryl-tRNA(Sec), which will be further converted into selenocysteinyl-tRNA(Sec).</text>
</comment>
<comment type="catalytic activity">
    <reaction evidence="1">
        <text>tRNA(Ser) + L-serine + ATP = L-seryl-tRNA(Ser) + AMP + diphosphate + H(+)</text>
        <dbReference type="Rhea" id="RHEA:12292"/>
        <dbReference type="Rhea" id="RHEA-COMP:9669"/>
        <dbReference type="Rhea" id="RHEA-COMP:9703"/>
        <dbReference type="ChEBI" id="CHEBI:15378"/>
        <dbReference type="ChEBI" id="CHEBI:30616"/>
        <dbReference type="ChEBI" id="CHEBI:33019"/>
        <dbReference type="ChEBI" id="CHEBI:33384"/>
        <dbReference type="ChEBI" id="CHEBI:78442"/>
        <dbReference type="ChEBI" id="CHEBI:78533"/>
        <dbReference type="ChEBI" id="CHEBI:456215"/>
        <dbReference type="EC" id="6.1.1.11"/>
    </reaction>
</comment>
<comment type="catalytic activity">
    <reaction evidence="1">
        <text>tRNA(Sec) + L-serine + ATP = L-seryl-tRNA(Sec) + AMP + diphosphate + H(+)</text>
        <dbReference type="Rhea" id="RHEA:42580"/>
        <dbReference type="Rhea" id="RHEA-COMP:9742"/>
        <dbReference type="Rhea" id="RHEA-COMP:10128"/>
        <dbReference type="ChEBI" id="CHEBI:15378"/>
        <dbReference type="ChEBI" id="CHEBI:30616"/>
        <dbReference type="ChEBI" id="CHEBI:33019"/>
        <dbReference type="ChEBI" id="CHEBI:33384"/>
        <dbReference type="ChEBI" id="CHEBI:78442"/>
        <dbReference type="ChEBI" id="CHEBI:78533"/>
        <dbReference type="ChEBI" id="CHEBI:456215"/>
        <dbReference type="EC" id="6.1.1.11"/>
    </reaction>
</comment>
<comment type="pathway">
    <text evidence="1">Aminoacyl-tRNA biosynthesis; selenocysteinyl-tRNA(Sec) biosynthesis; L-seryl-tRNA(Sec) from L-serine and tRNA(Sec): step 1/1.</text>
</comment>
<comment type="subunit">
    <text evidence="1">Homodimer. The tRNA molecule binds across the dimer.</text>
</comment>
<comment type="subcellular location">
    <subcellularLocation>
        <location evidence="1">Cytoplasm</location>
    </subcellularLocation>
</comment>
<comment type="domain">
    <text evidence="1">Consists of two distinct domains, a catalytic core and a N-terminal extension that is involved in tRNA binding.</text>
</comment>
<comment type="similarity">
    <text evidence="1">Belongs to the class-II aminoacyl-tRNA synthetase family. Type-1 seryl-tRNA synthetase subfamily.</text>
</comment>
<gene>
    <name evidence="1" type="primary">serS</name>
    <name type="ordered locus">WD_0028</name>
</gene>
<feature type="chain" id="PRO_0000122159" description="Serine--tRNA ligase">
    <location>
        <begin position="1"/>
        <end position="425"/>
    </location>
</feature>
<feature type="binding site" evidence="1">
    <location>
        <begin position="230"/>
        <end position="232"/>
    </location>
    <ligand>
        <name>L-serine</name>
        <dbReference type="ChEBI" id="CHEBI:33384"/>
    </ligand>
</feature>
<feature type="binding site" evidence="1">
    <location>
        <begin position="261"/>
        <end position="263"/>
    </location>
    <ligand>
        <name>ATP</name>
        <dbReference type="ChEBI" id="CHEBI:30616"/>
    </ligand>
</feature>
<feature type="binding site" evidence="1">
    <location>
        <position position="284"/>
    </location>
    <ligand>
        <name>L-serine</name>
        <dbReference type="ChEBI" id="CHEBI:33384"/>
    </ligand>
</feature>
<feature type="binding site" evidence="1">
    <location>
        <begin position="348"/>
        <end position="351"/>
    </location>
    <ligand>
        <name>ATP</name>
        <dbReference type="ChEBI" id="CHEBI:30616"/>
    </ligand>
</feature>
<feature type="binding site" evidence="1">
    <location>
        <position position="385"/>
    </location>
    <ligand>
        <name>L-serine</name>
        <dbReference type="ChEBI" id="CHEBI:33384"/>
    </ligand>
</feature>
<sequence>MHDIEYIRKNPEGFEKAMKSRGIRESTAEEILEIDHEKRSLTTKLQDLNRQRNEITEEIKKLKMSKSPCEEQIELSKSITNEIEAISLKEQAEKDKLVNVLSNLPNIPAQDVPIGADENSNLEVRRYGGKRQFDFVPESHYELGEKLGLMDFEQAARISGSRFTILKGQLAKLGRALINCMLEMHVNEFGYTEVYHPALVKNEAMYNVGQLPKFSDDSYLTTDELRLIPTSEVFLTNLVADKIMEEKELPIRFTAYSECFRKEAGSAGRDTRGMIRQHQFGKVELVSITTEDQSNDELERMTSVAEEILKKLELPYRVMLLCSGDMGFAAQRTYDIEVWLPGQNKYREISSCSNCGAFQARRMNTKYSSETDKKMKKYIHTLNGSALAIGRTIIAIMENYQNSDGSIAIPNVLQKYMSNDTVISK</sequence>
<reference key="1">
    <citation type="journal article" date="2004" name="PLoS Biol.">
        <title>Phylogenomics of the reproductive parasite Wolbachia pipientis wMel: a streamlined genome overrun by mobile genetic elements.</title>
        <authorList>
            <person name="Wu M."/>
            <person name="Sun L.V."/>
            <person name="Vamathevan J.J."/>
            <person name="Riegler M."/>
            <person name="DeBoy R.T."/>
            <person name="Brownlie J.C."/>
            <person name="McGraw E.A."/>
            <person name="Martin W."/>
            <person name="Esser C."/>
            <person name="Ahmadinejad N."/>
            <person name="Wiegand C."/>
            <person name="Madupu R."/>
            <person name="Beanan M.J."/>
            <person name="Brinkac L.M."/>
            <person name="Daugherty S.C."/>
            <person name="Durkin A.S."/>
            <person name="Kolonay J.F."/>
            <person name="Nelson W.C."/>
            <person name="Mohamoud Y."/>
            <person name="Lee P."/>
            <person name="Berry K.J."/>
            <person name="Young M.B."/>
            <person name="Utterback T.R."/>
            <person name="Weidman J.F."/>
            <person name="Nierman W.C."/>
            <person name="Paulsen I.T."/>
            <person name="Nelson K.E."/>
            <person name="Tettelin H."/>
            <person name="O'Neill S.L."/>
            <person name="Eisen J.A."/>
        </authorList>
    </citation>
    <scope>NUCLEOTIDE SEQUENCE [LARGE SCALE GENOMIC DNA]</scope>
</reference>